<comment type="function">
    <text evidence="1">Major acute phase reactant. Apolipoprotein of the HDL complex. In vitro exhibits antimicrobial activity against Escherichia coli, Streptococcus uberis and Pseudomonas aeruginosa (By similarity).</text>
</comment>
<comment type="subcellular location">
    <subcellularLocation>
        <location evidence="1">Secreted</location>
    </subcellularLocation>
</comment>
<comment type="tissue specificity">
    <text>Expressed by the liver; secreted in plasma.</text>
</comment>
<comment type="induction">
    <text>Upon cytokine stimulation.</text>
</comment>
<comment type="disease">
    <text>Reactive, secondary amyloidosis is characterized by the extracellular accumulation in various tissues of the SAA protein. These deposits are highly insoluble and resistant to proteolysis; they disrupt tissue structure and compromise function.</text>
</comment>
<comment type="similarity">
    <text evidence="4">Belongs to the SAA family.</text>
</comment>
<feature type="signal peptide" evidence="2">
    <location>
        <begin position="1"/>
        <end position="18"/>
    </location>
</feature>
<feature type="chain" id="PRO_0000031587" description="Serum amyloid A-3 protein" evidence="2">
    <location>
        <begin position="19"/>
        <end position="122"/>
    </location>
</feature>
<feature type="region of interest" description="Disordered" evidence="3">
    <location>
        <begin position="100"/>
        <end position="122"/>
    </location>
</feature>
<evidence type="ECO:0000250" key="1">
    <source>
        <dbReference type="UniProtKB" id="Q8SQ28"/>
    </source>
</evidence>
<evidence type="ECO:0000255" key="2"/>
<evidence type="ECO:0000256" key="3">
    <source>
        <dbReference type="SAM" id="MobiDB-lite"/>
    </source>
</evidence>
<evidence type="ECO:0000305" key="4"/>
<protein>
    <recommendedName>
        <fullName>Serum amyloid A-3 protein</fullName>
    </recommendedName>
</protein>
<dbReference type="EMBL" id="M33431">
    <property type="protein sequence ID" value="AAA37098.1"/>
    <property type="molecule type" value="mRNA"/>
</dbReference>
<dbReference type="PIR" id="A30248">
    <property type="entry name" value="A30248"/>
</dbReference>
<dbReference type="RefSeq" id="NP_001297487.1">
    <property type="nucleotide sequence ID" value="NM_001310558.1"/>
</dbReference>
<dbReference type="SMR" id="P19453"/>
<dbReference type="STRING" id="10036.ENSMAUP00000002152"/>
<dbReference type="GeneID" id="101833293"/>
<dbReference type="KEGG" id="maua:101833293"/>
<dbReference type="OrthoDB" id="6112826at2759"/>
<dbReference type="Proteomes" id="UP000189706">
    <property type="component" value="Unplaced"/>
</dbReference>
<dbReference type="GO" id="GO:0034364">
    <property type="term" value="C:high-density lipoprotein particle"/>
    <property type="evidence" value="ECO:0007669"/>
    <property type="project" value="UniProtKB-KW"/>
</dbReference>
<dbReference type="GO" id="GO:0006953">
    <property type="term" value="P:acute-phase response"/>
    <property type="evidence" value="ECO:0007669"/>
    <property type="project" value="UniProtKB-KW"/>
</dbReference>
<dbReference type="FunFam" id="1.10.132.110:FF:000001">
    <property type="entry name" value="Serum amyloid A protein"/>
    <property type="match status" value="1"/>
</dbReference>
<dbReference type="Gene3D" id="1.10.132.110">
    <property type="entry name" value="Serum amyloid A protein"/>
    <property type="match status" value="1"/>
</dbReference>
<dbReference type="InterPro" id="IPR000096">
    <property type="entry name" value="Serum_amyloid_A"/>
</dbReference>
<dbReference type="InterPro" id="IPR052464">
    <property type="entry name" value="Synovial_Prolif_Regulator"/>
</dbReference>
<dbReference type="PANTHER" id="PTHR23424">
    <property type="entry name" value="SERUM AMYLOID A"/>
    <property type="match status" value="1"/>
</dbReference>
<dbReference type="PANTHER" id="PTHR23424:SF29">
    <property type="entry name" value="SERUM AMYLOID A PROTEIN"/>
    <property type="match status" value="1"/>
</dbReference>
<dbReference type="Pfam" id="PF00277">
    <property type="entry name" value="SAA"/>
    <property type="match status" value="1"/>
</dbReference>
<dbReference type="PIRSF" id="PIRSF002472">
    <property type="entry name" value="Serum_amyloid_A"/>
    <property type="match status" value="1"/>
</dbReference>
<dbReference type="PRINTS" id="PR00306">
    <property type="entry name" value="SERUMAMYLOID"/>
</dbReference>
<dbReference type="SMART" id="SM00197">
    <property type="entry name" value="SAA"/>
    <property type="match status" value="1"/>
</dbReference>
<dbReference type="PROSITE" id="PS00992">
    <property type="entry name" value="SAA"/>
    <property type="match status" value="1"/>
</dbReference>
<proteinExistence type="evidence at transcript level"/>
<organism>
    <name type="scientific">Mesocricetus auratus</name>
    <name type="common">Golden hamster</name>
    <dbReference type="NCBI Taxonomy" id="10036"/>
    <lineage>
        <taxon>Eukaryota</taxon>
        <taxon>Metazoa</taxon>
        <taxon>Chordata</taxon>
        <taxon>Craniata</taxon>
        <taxon>Vertebrata</taxon>
        <taxon>Euteleostomi</taxon>
        <taxon>Mammalia</taxon>
        <taxon>Eutheria</taxon>
        <taxon>Euarchontoglires</taxon>
        <taxon>Glires</taxon>
        <taxon>Rodentia</taxon>
        <taxon>Myomorpha</taxon>
        <taxon>Muroidea</taxon>
        <taxon>Cricetidae</taxon>
        <taxon>Cricetinae</taxon>
        <taxon>Mesocricetus</taxon>
    </lineage>
</organism>
<keyword id="KW-0011">Acute phase</keyword>
<keyword id="KW-0034">Amyloid</keyword>
<keyword id="KW-0345">HDL</keyword>
<keyword id="KW-1185">Reference proteome</keyword>
<keyword id="KW-0964">Secreted</keyword>
<keyword id="KW-0732">Signal</keyword>
<sequence length="122" mass="13815">MKPFLAIIFCFLILGVDSQRWFQFMKEAGQGSTDMWRAYSDMREANWKNSDKYFHARGNYDAAKRGPGGAWAAKVISDAREGIQRFTGRGAADSRADQFANKWGRSGKDPNHFRPAGLPSKY</sequence>
<gene>
    <name type="primary">SAA3</name>
</gene>
<accession>P19453</accession>
<name>SAA3_MESAU</name>
<reference key="1">
    <citation type="journal article" date="1990" name="Mol. Cell. Biol.">
        <title>Serum amyloid A protein-related mRNA expression in herpes simplex virus type 2-transformed hamster cells.</title>
        <authorList>
            <person name="Gervais C."/>
            <person name="Suh M."/>
        </authorList>
    </citation>
    <scope>NUCLEOTIDE SEQUENCE [MRNA]</scope>
</reference>